<evidence type="ECO:0000255" key="1">
    <source>
        <dbReference type="HAMAP-Rule" id="MF_01031"/>
    </source>
</evidence>
<protein>
    <recommendedName>
        <fullName evidence="1">3-isopropylmalate dehydratase small subunit</fullName>
        <ecNumber evidence="1">4.2.1.33</ecNumber>
    </recommendedName>
    <alternativeName>
        <fullName evidence="1">Alpha-IPM isomerase</fullName>
        <shortName evidence="1">IPMI</shortName>
    </alternativeName>
    <alternativeName>
        <fullName evidence="1">Isopropylmalate isomerase</fullName>
    </alternativeName>
</protein>
<sequence>MDKFTKLTGVAAPLPIVNIDTDMIIPKDYLKTIKRTGLGKGLFAEMRFNEDGSENPDFVLNKPGYRKAQILVAGDNFGCGSSREHAPWALLDYGIRCVISTSFADIFYNNCFKNGILPIKVAQEDLDKLMDDASRGANATLTIDLETKQIHGPDGGTISFDLDDFKRHCLLNGLDDIGLTMEKAKSIDTFEAKNAEERPWA</sequence>
<reference key="1">
    <citation type="journal article" date="2005" name="J. Bacteriol.">
        <title>Completion of the genome sequence of Brucella abortus and comparison to the highly similar genomes of Brucella melitensis and Brucella suis.</title>
        <authorList>
            <person name="Halling S.M."/>
            <person name="Peterson-Burch B.D."/>
            <person name="Bricker B.J."/>
            <person name="Zuerner R.L."/>
            <person name="Qing Z."/>
            <person name="Li L.-L."/>
            <person name="Kapur V."/>
            <person name="Alt D.P."/>
            <person name="Olsen S.C."/>
        </authorList>
    </citation>
    <scope>NUCLEOTIDE SEQUENCE [LARGE SCALE GENOMIC DNA]</scope>
    <source>
        <strain>9-941</strain>
    </source>
</reference>
<comment type="function">
    <text evidence="1">Catalyzes the isomerization between 2-isopropylmalate and 3-isopropylmalate, via the formation of 2-isopropylmaleate.</text>
</comment>
<comment type="catalytic activity">
    <reaction evidence="1">
        <text>(2R,3S)-3-isopropylmalate = (2S)-2-isopropylmalate</text>
        <dbReference type="Rhea" id="RHEA:32287"/>
        <dbReference type="ChEBI" id="CHEBI:1178"/>
        <dbReference type="ChEBI" id="CHEBI:35121"/>
        <dbReference type="EC" id="4.2.1.33"/>
    </reaction>
</comment>
<comment type="pathway">
    <text evidence="1">Amino-acid biosynthesis; L-leucine biosynthesis; L-leucine from 3-methyl-2-oxobutanoate: step 2/4.</text>
</comment>
<comment type="subunit">
    <text evidence="1">Heterodimer of LeuC and LeuD.</text>
</comment>
<comment type="similarity">
    <text evidence="1">Belongs to the LeuD family. LeuD type 1 subfamily.</text>
</comment>
<name>LEUD_BRUAB</name>
<feature type="chain" id="PRO_1000063739" description="3-isopropylmalate dehydratase small subunit">
    <location>
        <begin position="1"/>
        <end position="201"/>
    </location>
</feature>
<dbReference type="EC" id="4.2.1.33" evidence="1"/>
<dbReference type="EMBL" id="AE017224">
    <property type="protein sequence ID" value="AAX75780.1"/>
    <property type="molecule type" value="Genomic_DNA"/>
</dbReference>
<dbReference type="RefSeq" id="WP_002965763.1">
    <property type="nucleotide sequence ID" value="NC_006933.1"/>
</dbReference>
<dbReference type="SMR" id="Q579A4"/>
<dbReference type="EnsemblBacteria" id="AAX75780">
    <property type="protein sequence ID" value="AAX75780"/>
    <property type="gene ID" value="BruAb2_0349"/>
</dbReference>
<dbReference type="GeneID" id="97535045"/>
<dbReference type="KEGG" id="bmb:BruAb2_0349"/>
<dbReference type="HOGENOM" id="CLU_081378_0_3_5"/>
<dbReference type="UniPathway" id="UPA00048">
    <property type="reaction ID" value="UER00071"/>
</dbReference>
<dbReference type="Proteomes" id="UP000000540">
    <property type="component" value="Chromosome II"/>
</dbReference>
<dbReference type="GO" id="GO:0009316">
    <property type="term" value="C:3-isopropylmalate dehydratase complex"/>
    <property type="evidence" value="ECO:0007669"/>
    <property type="project" value="InterPro"/>
</dbReference>
<dbReference type="GO" id="GO:0003861">
    <property type="term" value="F:3-isopropylmalate dehydratase activity"/>
    <property type="evidence" value="ECO:0007669"/>
    <property type="project" value="UniProtKB-UniRule"/>
</dbReference>
<dbReference type="GO" id="GO:0009098">
    <property type="term" value="P:L-leucine biosynthetic process"/>
    <property type="evidence" value="ECO:0007669"/>
    <property type="project" value="UniProtKB-UniRule"/>
</dbReference>
<dbReference type="CDD" id="cd01577">
    <property type="entry name" value="IPMI_Swivel"/>
    <property type="match status" value="1"/>
</dbReference>
<dbReference type="FunFam" id="3.20.19.10:FF:000003">
    <property type="entry name" value="3-isopropylmalate dehydratase small subunit"/>
    <property type="match status" value="1"/>
</dbReference>
<dbReference type="Gene3D" id="3.20.19.10">
    <property type="entry name" value="Aconitase, domain 4"/>
    <property type="match status" value="1"/>
</dbReference>
<dbReference type="HAMAP" id="MF_01031">
    <property type="entry name" value="LeuD_type1"/>
    <property type="match status" value="1"/>
</dbReference>
<dbReference type="InterPro" id="IPR004431">
    <property type="entry name" value="3-IsopropMal_deHydase_ssu"/>
</dbReference>
<dbReference type="InterPro" id="IPR015928">
    <property type="entry name" value="Aconitase/3IPM_dehydase_swvl"/>
</dbReference>
<dbReference type="InterPro" id="IPR000573">
    <property type="entry name" value="AconitaseA/IPMdHydase_ssu_swvl"/>
</dbReference>
<dbReference type="InterPro" id="IPR033940">
    <property type="entry name" value="IPMI_Swivel"/>
</dbReference>
<dbReference type="InterPro" id="IPR050075">
    <property type="entry name" value="LeuD"/>
</dbReference>
<dbReference type="NCBIfam" id="TIGR00171">
    <property type="entry name" value="leuD"/>
    <property type="match status" value="1"/>
</dbReference>
<dbReference type="NCBIfam" id="NF002458">
    <property type="entry name" value="PRK01641.1"/>
    <property type="match status" value="1"/>
</dbReference>
<dbReference type="PANTHER" id="PTHR43345:SF5">
    <property type="entry name" value="3-ISOPROPYLMALATE DEHYDRATASE SMALL SUBUNIT"/>
    <property type="match status" value="1"/>
</dbReference>
<dbReference type="PANTHER" id="PTHR43345">
    <property type="entry name" value="3-ISOPROPYLMALATE DEHYDRATASE SMALL SUBUNIT 2-RELATED-RELATED"/>
    <property type="match status" value="1"/>
</dbReference>
<dbReference type="Pfam" id="PF00694">
    <property type="entry name" value="Aconitase_C"/>
    <property type="match status" value="1"/>
</dbReference>
<dbReference type="SUPFAM" id="SSF52016">
    <property type="entry name" value="LeuD/IlvD-like"/>
    <property type="match status" value="1"/>
</dbReference>
<proteinExistence type="inferred from homology"/>
<accession>Q579A4</accession>
<organism>
    <name type="scientific">Brucella abortus biovar 1 (strain 9-941)</name>
    <dbReference type="NCBI Taxonomy" id="262698"/>
    <lineage>
        <taxon>Bacteria</taxon>
        <taxon>Pseudomonadati</taxon>
        <taxon>Pseudomonadota</taxon>
        <taxon>Alphaproteobacteria</taxon>
        <taxon>Hyphomicrobiales</taxon>
        <taxon>Brucellaceae</taxon>
        <taxon>Brucella/Ochrobactrum group</taxon>
        <taxon>Brucella</taxon>
    </lineage>
</organism>
<gene>
    <name evidence="1" type="primary">leuD</name>
    <name type="ordered locus">BruAb2_0349</name>
</gene>
<keyword id="KW-0028">Amino-acid biosynthesis</keyword>
<keyword id="KW-0100">Branched-chain amino acid biosynthesis</keyword>
<keyword id="KW-0432">Leucine biosynthesis</keyword>
<keyword id="KW-0456">Lyase</keyword>